<keyword id="KW-0963">Cytoplasm</keyword>
<keyword id="KW-0444">Lipid biosynthesis</keyword>
<keyword id="KW-0443">Lipid metabolism</keyword>
<keyword id="KW-0594">Phospholipid biosynthesis</keyword>
<keyword id="KW-1208">Phospholipid metabolism</keyword>
<keyword id="KW-1185">Reference proteome</keyword>
<keyword id="KW-0808">Transferase</keyword>
<dbReference type="EC" id="2.3.1.274" evidence="1"/>
<dbReference type="EMBL" id="AE001437">
    <property type="protein sequence ID" value="AAK79712.1"/>
    <property type="molecule type" value="Genomic_DNA"/>
</dbReference>
<dbReference type="PIR" id="E97115">
    <property type="entry name" value="E97115"/>
</dbReference>
<dbReference type="RefSeq" id="NP_348372.1">
    <property type="nucleotide sequence ID" value="NC_003030.1"/>
</dbReference>
<dbReference type="RefSeq" id="WP_010965053.1">
    <property type="nucleotide sequence ID" value="NC_003030.1"/>
</dbReference>
<dbReference type="SMR" id="Q97IA6"/>
<dbReference type="STRING" id="272562.CA_C1746"/>
<dbReference type="GeneID" id="44998241"/>
<dbReference type="KEGG" id="cac:CA_C1746"/>
<dbReference type="PATRIC" id="fig|272562.8.peg.1949"/>
<dbReference type="eggNOG" id="COG0416">
    <property type="taxonomic scope" value="Bacteria"/>
</dbReference>
<dbReference type="HOGENOM" id="CLU_039379_1_1_9"/>
<dbReference type="OrthoDB" id="9806408at2"/>
<dbReference type="UniPathway" id="UPA00085"/>
<dbReference type="Proteomes" id="UP000000814">
    <property type="component" value="Chromosome"/>
</dbReference>
<dbReference type="GO" id="GO:0005737">
    <property type="term" value="C:cytoplasm"/>
    <property type="evidence" value="ECO:0007669"/>
    <property type="project" value="UniProtKB-SubCell"/>
</dbReference>
<dbReference type="GO" id="GO:0043811">
    <property type="term" value="F:phosphate:acyl-[acyl carrier protein] acyltransferase activity"/>
    <property type="evidence" value="ECO:0007669"/>
    <property type="project" value="UniProtKB-UniRule"/>
</dbReference>
<dbReference type="GO" id="GO:0006633">
    <property type="term" value="P:fatty acid biosynthetic process"/>
    <property type="evidence" value="ECO:0007669"/>
    <property type="project" value="UniProtKB-UniRule"/>
</dbReference>
<dbReference type="GO" id="GO:0008654">
    <property type="term" value="P:phospholipid biosynthetic process"/>
    <property type="evidence" value="ECO:0007669"/>
    <property type="project" value="UniProtKB-KW"/>
</dbReference>
<dbReference type="Gene3D" id="3.40.718.10">
    <property type="entry name" value="Isopropylmalate Dehydrogenase"/>
    <property type="match status" value="1"/>
</dbReference>
<dbReference type="HAMAP" id="MF_00019">
    <property type="entry name" value="PlsX"/>
    <property type="match status" value="1"/>
</dbReference>
<dbReference type="InterPro" id="IPR003664">
    <property type="entry name" value="FA_synthesis"/>
</dbReference>
<dbReference type="InterPro" id="IPR012281">
    <property type="entry name" value="Phospholipid_synth_PlsX-like"/>
</dbReference>
<dbReference type="NCBIfam" id="TIGR00182">
    <property type="entry name" value="plsX"/>
    <property type="match status" value="1"/>
</dbReference>
<dbReference type="PANTHER" id="PTHR30100">
    <property type="entry name" value="FATTY ACID/PHOSPHOLIPID SYNTHESIS PROTEIN PLSX"/>
    <property type="match status" value="1"/>
</dbReference>
<dbReference type="PANTHER" id="PTHR30100:SF1">
    <property type="entry name" value="PHOSPHATE ACYLTRANSFERASE"/>
    <property type="match status" value="1"/>
</dbReference>
<dbReference type="Pfam" id="PF02504">
    <property type="entry name" value="FA_synthesis"/>
    <property type="match status" value="1"/>
</dbReference>
<dbReference type="PIRSF" id="PIRSF002465">
    <property type="entry name" value="Phsphlp_syn_PlsX"/>
    <property type="match status" value="1"/>
</dbReference>
<dbReference type="SUPFAM" id="SSF53659">
    <property type="entry name" value="Isocitrate/Isopropylmalate dehydrogenase-like"/>
    <property type="match status" value="1"/>
</dbReference>
<protein>
    <recommendedName>
        <fullName evidence="1">Phosphate acyltransferase</fullName>
        <ecNumber evidence="1">2.3.1.274</ecNumber>
    </recommendedName>
    <alternativeName>
        <fullName evidence="1">Acyl-ACP phosphotransacylase</fullName>
    </alternativeName>
    <alternativeName>
        <fullName evidence="1">Acyl-[acyl-carrier-protein]--phosphate acyltransferase</fullName>
    </alternativeName>
    <alternativeName>
        <fullName evidence="1">Phosphate-acyl-ACP acyltransferase</fullName>
    </alternativeName>
</protein>
<sequence length="331" mass="35415">MIIAIDGMGGDNAPEAVVKGCVEAIKGNSSIHIIITGPSDKISAELKKYTFNEESIEIVDAKDVITNNEHPVMAVRRKKESSLYKALNLVKEGKADAVISAGSTGALMAGATLMIGRIKGIDRVALSPIMPGKNSPFMVTDAGANVDCKPQYLVQFALMGKIYFESVLGVKKPTIGLVNIGAEEEKGNELTKSAYKLLKESGLNFVGNVEPRDASTGDVDILVCDGFVGNTLLKMYEGVALNLFKMLKSEITSSTRAKVGALMLKPVLKDFAKKFDYSEYGGSPFLGSKGIVIKAHGSSNSKAFKNAINQAVSCSENKIIDKISRQLEELN</sequence>
<accession>Q97IA6</accession>
<gene>
    <name evidence="1" type="primary">plsX</name>
    <name type="ordered locus">CA_C1746</name>
</gene>
<comment type="function">
    <text evidence="1">Catalyzes the reversible formation of acyl-phosphate (acyl-PO(4)) from acyl-[acyl-carrier-protein] (acyl-ACP). This enzyme utilizes acyl-ACP as fatty acyl donor, but not acyl-CoA.</text>
</comment>
<comment type="catalytic activity">
    <reaction evidence="1">
        <text>a fatty acyl-[ACP] + phosphate = an acyl phosphate + holo-[ACP]</text>
        <dbReference type="Rhea" id="RHEA:42292"/>
        <dbReference type="Rhea" id="RHEA-COMP:9685"/>
        <dbReference type="Rhea" id="RHEA-COMP:14125"/>
        <dbReference type="ChEBI" id="CHEBI:43474"/>
        <dbReference type="ChEBI" id="CHEBI:59918"/>
        <dbReference type="ChEBI" id="CHEBI:64479"/>
        <dbReference type="ChEBI" id="CHEBI:138651"/>
        <dbReference type="EC" id="2.3.1.274"/>
    </reaction>
</comment>
<comment type="pathway">
    <text evidence="1">Lipid metabolism; phospholipid metabolism.</text>
</comment>
<comment type="subunit">
    <text evidence="1">Homodimer. Probably interacts with PlsY.</text>
</comment>
<comment type="subcellular location">
    <subcellularLocation>
        <location evidence="1">Cytoplasm</location>
    </subcellularLocation>
    <text evidence="1">Associated with the membrane possibly through PlsY.</text>
</comment>
<comment type="similarity">
    <text evidence="1">Belongs to the PlsX family.</text>
</comment>
<proteinExistence type="inferred from homology"/>
<name>PLSX_CLOAB</name>
<organism>
    <name type="scientific">Clostridium acetobutylicum (strain ATCC 824 / DSM 792 / JCM 1419 / IAM 19013 / LMG 5710 / NBRC 13948 / NRRL B-527 / VKM B-1787 / 2291 / W)</name>
    <dbReference type="NCBI Taxonomy" id="272562"/>
    <lineage>
        <taxon>Bacteria</taxon>
        <taxon>Bacillati</taxon>
        <taxon>Bacillota</taxon>
        <taxon>Clostridia</taxon>
        <taxon>Eubacteriales</taxon>
        <taxon>Clostridiaceae</taxon>
        <taxon>Clostridium</taxon>
    </lineage>
</organism>
<feature type="chain" id="PRO_0000189868" description="Phosphate acyltransferase">
    <location>
        <begin position="1"/>
        <end position="331"/>
    </location>
</feature>
<evidence type="ECO:0000255" key="1">
    <source>
        <dbReference type="HAMAP-Rule" id="MF_00019"/>
    </source>
</evidence>
<reference key="1">
    <citation type="journal article" date="2001" name="J. Bacteriol.">
        <title>Genome sequence and comparative analysis of the solvent-producing bacterium Clostridium acetobutylicum.</title>
        <authorList>
            <person name="Noelling J."/>
            <person name="Breton G."/>
            <person name="Omelchenko M.V."/>
            <person name="Makarova K.S."/>
            <person name="Zeng Q."/>
            <person name="Gibson R."/>
            <person name="Lee H.M."/>
            <person name="Dubois J."/>
            <person name="Qiu D."/>
            <person name="Hitti J."/>
            <person name="Wolf Y.I."/>
            <person name="Tatusov R.L."/>
            <person name="Sabathe F."/>
            <person name="Doucette-Stamm L.A."/>
            <person name="Soucaille P."/>
            <person name="Daly M.J."/>
            <person name="Bennett G.N."/>
            <person name="Koonin E.V."/>
            <person name="Smith D.R."/>
        </authorList>
    </citation>
    <scope>NUCLEOTIDE SEQUENCE [LARGE SCALE GENOMIC DNA]</scope>
    <source>
        <strain>ATCC 824 / DSM 792 / JCM 1419 / IAM 19013 / LMG 5710 / NBRC 13948 / NRRL B-527 / VKM B-1787 / 2291 / W</strain>
    </source>
</reference>